<accession>B0KKZ7</accession>
<evidence type="ECO:0000255" key="1">
    <source>
        <dbReference type="HAMAP-Rule" id="MF_00149"/>
    </source>
</evidence>
<dbReference type="EMBL" id="CP000926">
    <property type="protein sequence ID" value="ABZ00833.1"/>
    <property type="molecule type" value="Genomic_DNA"/>
</dbReference>
<dbReference type="RefSeq" id="WP_012274459.1">
    <property type="nucleotide sequence ID" value="NC_010322.1"/>
</dbReference>
<dbReference type="SMR" id="B0KKZ7"/>
<dbReference type="KEGG" id="ppg:PputGB1_4948"/>
<dbReference type="eggNOG" id="COG0323">
    <property type="taxonomic scope" value="Bacteria"/>
</dbReference>
<dbReference type="HOGENOM" id="CLU_004131_4_2_6"/>
<dbReference type="Proteomes" id="UP000002157">
    <property type="component" value="Chromosome"/>
</dbReference>
<dbReference type="GO" id="GO:0032300">
    <property type="term" value="C:mismatch repair complex"/>
    <property type="evidence" value="ECO:0007669"/>
    <property type="project" value="InterPro"/>
</dbReference>
<dbReference type="GO" id="GO:0005524">
    <property type="term" value="F:ATP binding"/>
    <property type="evidence" value="ECO:0007669"/>
    <property type="project" value="InterPro"/>
</dbReference>
<dbReference type="GO" id="GO:0016887">
    <property type="term" value="F:ATP hydrolysis activity"/>
    <property type="evidence" value="ECO:0007669"/>
    <property type="project" value="InterPro"/>
</dbReference>
<dbReference type="GO" id="GO:0140664">
    <property type="term" value="F:ATP-dependent DNA damage sensor activity"/>
    <property type="evidence" value="ECO:0007669"/>
    <property type="project" value="InterPro"/>
</dbReference>
<dbReference type="GO" id="GO:0030983">
    <property type="term" value="F:mismatched DNA binding"/>
    <property type="evidence" value="ECO:0007669"/>
    <property type="project" value="InterPro"/>
</dbReference>
<dbReference type="GO" id="GO:0006298">
    <property type="term" value="P:mismatch repair"/>
    <property type="evidence" value="ECO:0007669"/>
    <property type="project" value="UniProtKB-UniRule"/>
</dbReference>
<dbReference type="CDD" id="cd16926">
    <property type="entry name" value="HATPase_MutL-MLH-PMS-like"/>
    <property type="match status" value="1"/>
</dbReference>
<dbReference type="CDD" id="cd03482">
    <property type="entry name" value="MutL_Trans_MutL"/>
    <property type="match status" value="1"/>
</dbReference>
<dbReference type="FunFam" id="3.30.230.10:FF:000013">
    <property type="entry name" value="DNA mismatch repair endonuclease MutL"/>
    <property type="match status" value="1"/>
</dbReference>
<dbReference type="FunFam" id="3.30.565.10:FF:000003">
    <property type="entry name" value="DNA mismatch repair endonuclease MutL"/>
    <property type="match status" value="1"/>
</dbReference>
<dbReference type="FunFam" id="3.30.1370.100:FF:000005">
    <property type="entry name" value="DNA mismatch repair protein MutL"/>
    <property type="match status" value="1"/>
</dbReference>
<dbReference type="Gene3D" id="3.30.230.10">
    <property type="match status" value="1"/>
</dbReference>
<dbReference type="Gene3D" id="3.30.565.10">
    <property type="entry name" value="Histidine kinase-like ATPase, C-terminal domain"/>
    <property type="match status" value="1"/>
</dbReference>
<dbReference type="Gene3D" id="3.30.1540.20">
    <property type="entry name" value="MutL, C-terminal domain, dimerisation subdomain"/>
    <property type="match status" value="1"/>
</dbReference>
<dbReference type="Gene3D" id="3.30.1370.100">
    <property type="entry name" value="MutL, C-terminal domain, regulatory subdomain"/>
    <property type="match status" value="1"/>
</dbReference>
<dbReference type="HAMAP" id="MF_00149">
    <property type="entry name" value="DNA_mis_repair"/>
    <property type="match status" value="1"/>
</dbReference>
<dbReference type="InterPro" id="IPR014762">
    <property type="entry name" value="DNA_mismatch_repair_CS"/>
</dbReference>
<dbReference type="InterPro" id="IPR020667">
    <property type="entry name" value="DNA_mismatch_repair_MutL"/>
</dbReference>
<dbReference type="InterPro" id="IPR013507">
    <property type="entry name" value="DNA_mismatch_S5_2-like"/>
</dbReference>
<dbReference type="InterPro" id="IPR036890">
    <property type="entry name" value="HATPase_C_sf"/>
</dbReference>
<dbReference type="InterPro" id="IPR002099">
    <property type="entry name" value="MutL/Mlh/PMS"/>
</dbReference>
<dbReference type="InterPro" id="IPR038973">
    <property type="entry name" value="MutL/Mlh/Pms-like"/>
</dbReference>
<dbReference type="InterPro" id="IPR014790">
    <property type="entry name" value="MutL_C"/>
</dbReference>
<dbReference type="InterPro" id="IPR042120">
    <property type="entry name" value="MutL_C_dimsub"/>
</dbReference>
<dbReference type="InterPro" id="IPR042121">
    <property type="entry name" value="MutL_C_regsub"/>
</dbReference>
<dbReference type="InterPro" id="IPR037198">
    <property type="entry name" value="MutL_C_sf"/>
</dbReference>
<dbReference type="InterPro" id="IPR020568">
    <property type="entry name" value="Ribosomal_Su5_D2-typ_SF"/>
</dbReference>
<dbReference type="InterPro" id="IPR014721">
    <property type="entry name" value="Ribsml_uS5_D2-typ_fold_subgr"/>
</dbReference>
<dbReference type="NCBIfam" id="TIGR00585">
    <property type="entry name" value="mutl"/>
    <property type="match status" value="1"/>
</dbReference>
<dbReference type="NCBIfam" id="NF000949">
    <property type="entry name" value="PRK00095.1-2"/>
    <property type="match status" value="1"/>
</dbReference>
<dbReference type="PANTHER" id="PTHR10073">
    <property type="entry name" value="DNA MISMATCH REPAIR PROTEIN MLH, PMS, MUTL"/>
    <property type="match status" value="1"/>
</dbReference>
<dbReference type="PANTHER" id="PTHR10073:SF12">
    <property type="entry name" value="DNA MISMATCH REPAIR PROTEIN MLH1"/>
    <property type="match status" value="1"/>
</dbReference>
<dbReference type="Pfam" id="PF01119">
    <property type="entry name" value="DNA_mis_repair"/>
    <property type="match status" value="1"/>
</dbReference>
<dbReference type="Pfam" id="PF13589">
    <property type="entry name" value="HATPase_c_3"/>
    <property type="match status" value="1"/>
</dbReference>
<dbReference type="Pfam" id="PF08676">
    <property type="entry name" value="MutL_C"/>
    <property type="match status" value="1"/>
</dbReference>
<dbReference type="SMART" id="SM01340">
    <property type="entry name" value="DNA_mis_repair"/>
    <property type="match status" value="1"/>
</dbReference>
<dbReference type="SMART" id="SM00853">
    <property type="entry name" value="MutL_C"/>
    <property type="match status" value="1"/>
</dbReference>
<dbReference type="SUPFAM" id="SSF55874">
    <property type="entry name" value="ATPase domain of HSP90 chaperone/DNA topoisomerase II/histidine kinase"/>
    <property type="match status" value="1"/>
</dbReference>
<dbReference type="SUPFAM" id="SSF118116">
    <property type="entry name" value="DNA mismatch repair protein MutL"/>
    <property type="match status" value="1"/>
</dbReference>
<dbReference type="SUPFAM" id="SSF54211">
    <property type="entry name" value="Ribosomal protein S5 domain 2-like"/>
    <property type="match status" value="1"/>
</dbReference>
<dbReference type="PROSITE" id="PS00058">
    <property type="entry name" value="DNA_MISMATCH_REPAIR_1"/>
    <property type="match status" value="1"/>
</dbReference>
<reference key="1">
    <citation type="submission" date="2008-01" db="EMBL/GenBank/DDBJ databases">
        <title>Complete sequence of Pseudomonas putida GB-1.</title>
        <authorList>
            <consortium name="US DOE Joint Genome Institute"/>
            <person name="Copeland A."/>
            <person name="Lucas S."/>
            <person name="Lapidus A."/>
            <person name="Barry K."/>
            <person name="Glavina del Rio T."/>
            <person name="Dalin E."/>
            <person name="Tice H."/>
            <person name="Pitluck S."/>
            <person name="Bruce D."/>
            <person name="Goodwin L."/>
            <person name="Chertkov O."/>
            <person name="Brettin T."/>
            <person name="Detter J.C."/>
            <person name="Han C."/>
            <person name="Kuske C.R."/>
            <person name="Schmutz J."/>
            <person name="Larimer F."/>
            <person name="Land M."/>
            <person name="Hauser L."/>
            <person name="Kyrpides N."/>
            <person name="Kim E."/>
            <person name="McCarthy J.K."/>
            <person name="Richardson P."/>
        </authorList>
    </citation>
    <scope>NUCLEOTIDE SEQUENCE [LARGE SCALE GENOMIC DNA]</scope>
    <source>
        <strain>GB-1</strain>
    </source>
</reference>
<sequence length="632" mass="69686">MSGGSRIQLLSPRLANQIAAGEVVERPASVAKELLENSLDSGARRIDVEVEQGGVKLLKVRDDGSGISADDLPLALARHATSKIRELEDLEGVMSLGFRGEALASISSVARLTMTSRTASASEAWQVETEGRDMTPRVQPAAHPVGTSVEVRDLFFNTPARRKFLKAEKTEFDHLQEVIRRLALARFDVGFHLRHNGKSILSLHEAHDETARARRVGAICGPGFMEQALPIDVERNGLRLWGWVGLPTFSRSQADLQYFFVNGRAVRDKLVAHAVRQAYRDVLFNGRHPTFVLFLELEPNGVDVNVHPTKHEVRFREGRSVHDFLYGTLHRALADVRPEDQLAAPAAVPELARPTGQQAGEFGPQGEMRLASPVLEQPRAPQQSFSNGGSGAGYQYQYTPRPSQPLPAAEAQAVYREFYKPLDNGAAAATALPESQGDIPPLGYALAQLKGIYILAENAVGLVLVDMHAAHERIMYERLKVAMASEGLSGQPLLVPETLALSQREADCAEEHAQWFQRLGFELQRLGPETLAVRQIPALLKQAEANRLVQDVLADLMEYGTSDRIQAHLNELLGTMACHGAVRANRRLAIPEMNALLRDMENTERSGQCNHGRPTWTQMGLDDLDKLFLRGR</sequence>
<organism>
    <name type="scientific">Pseudomonas putida (strain GB-1)</name>
    <dbReference type="NCBI Taxonomy" id="76869"/>
    <lineage>
        <taxon>Bacteria</taxon>
        <taxon>Pseudomonadati</taxon>
        <taxon>Pseudomonadota</taxon>
        <taxon>Gammaproteobacteria</taxon>
        <taxon>Pseudomonadales</taxon>
        <taxon>Pseudomonadaceae</taxon>
        <taxon>Pseudomonas</taxon>
    </lineage>
</organism>
<feature type="chain" id="PRO_1000076705" description="DNA mismatch repair protein MutL">
    <location>
        <begin position="1"/>
        <end position="632"/>
    </location>
</feature>
<keyword id="KW-0227">DNA damage</keyword>
<keyword id="KW-0234">DNA repair</keyword>
<gene>
    <name evidence="1" type="primary">mutL</name>
    <name type="ordered locus">PputGB1_4948</name>
</gene>
<comment type="function">
    <text evidence="1">This protein is involved in the repair of mismatches in DNA. It is required for dam-dependent methyl-directed DNA mismatch repair. May act as a 'molecular matchmaker', a protein that promotes the formation of a stable complex between two or more DNA-binding proteins in an ATP-dependent manner without itself being part of a final effector complex.</text>
</comment>
<comment type="similarity">
    <text evidence="1">Belongs to the DNA mismatch repair MutL/HexB family.</text>
</comment>
<name>MUTL_PSEPG</name>
<proteinExistence type="inferred from homology"/>
<protein>
    <recommendedName>
        <fullName evidence="1">DNA mismatch repair protein MutL</fullName>
    </recommendedName>
</protein>